<protein>
    <recommendedName>
        <fullName evidence="3">Non-cysteinic peptide Bs 10</fullName>
        <shortName evidence="3">Bs10</shortName>
    </recommendedName>
    <alternativeName>
        <fullName evidence="4">Non-disulfide-bridged peptide 2.1</fullName>
        <shortName evidence="4">NDBP-2.1</shortName>
    </alternativeName>
</protein>
<name>NDB_HOTTS</name>
<reference key="1">
    <citation type="journal article" date="1998" name="Comp. Biochem. Physiol.">
        <title>Purification and primary structure of low molecular mass peptides from scorpion (Buthus sindicus) venom.</title>
        <authorList>
            <person name="Ali S.A."/>
            <person name="Stoeva S."/>
            <person name="Schuetz J."/>
            <person name="Kayed R."/>
            <person name="Abbasi A."/>
            <person name="Zaidi Z.H."/>
            <person name="Voelter W."/>
        </authorList>
    </citation>
    <scope>PROTEIN SEQUENCE</scope>
    <scope>SUBCELLULAR LOCATION</scope>
    <scope>MASS SPECTROMETRY</scope>
    <source>
        <tissue>Venom</tissue>
    </source>
</reference>
<reference key="2">
    <citation type="journal article" date="2005" name="IUBMB Life">
        <title>Scorpion venom peptides without disulfide bridges.</title>
        <authorList>
            <person name="Zeng X.C."/>
            <person name="Corzo G."/>
            <person name="Hahin R."/>
        </authorList>
    </citation>
    <scope>NOMENCLATURE</scope>
</reference>
<sequence>VTMGYIKDGDGKKIAKKKNKNGRKHVEIDLNKVG</sequence>
<feature type="peptide" id="PRO_0000044951" description="Non-cysteinic peptide Bs 10" evidence="3">
    <location>
        <begin position="1"/>
        <end position="34"/>
    </location>
</feature>
<feature type="region of interest" description="Disordered" evidence="1">
    <location>
        <begin position="1"/>
        <end position="34"/>
    </location>
</feature>
<feature type="compositionally biased region" description="Basic residues" evidence="1">
    <location>
        <begin position="14"/>
        <end position="23"/>
    </location>
</feature>
<feature type="compositionally biased region" description="Basic and acidic residues" evidence="1">
    <location>
        <begin position="24"/>
        <end position="34"/>
    </location>
</feature>
<keyword id="KW-0903">Direct protein sequencing</keyword>
<keyword id="KW-0964">Secreted</keyword>
<accession>P59866</accession>
<proteinExistence type="evidence at protein level"/>
<evidence type="ECO:0000256" key="1">
    <source>
        <dbReference type="SAM" id="MobiDB-lite"/>
    </source>
</evidence>
<evidence type="ECO:0000269" key="2">
    <source>
    </source>
</evidence>
<evidence type="ECO:0000303" key="3">
    <source>
    </source>
</evidence>
<evidence type="ECO:0000303" key="4">
    <source>
    </source>
</evidence>
<evidence type="ECO:0000305" key="5"/>
<organism>
    <name type="scientific">Hottentotta tamulus sindicus</name>
    <name type="common">Scorpion</name>
    <name type="synonym">Buthus sindicus</name>
    <dbReference type="NCBI Taxonomy" id="42519"/>
    <lineage>
        <taxon>Eukaryota</taxon>
        <taxon>Metazoa</taxon>
        <taxon>Ecdysozoa</taxon>
        <taxon>Arthropoda</taxon>
        <taxon>Chelicerata</taxon>
        <taxon>Arachnida</taxon>
        <taxon>Scorpiones</taxon>
        <taxon>Buthida</taxon>
        <taxon>Buthoidea</taxon>
        <taxon>Buthidae</taxon>
        <taxon>Mesobuthus</taxon>
    </lineage>
</organism>
<comment type="subcellular location">
    <subcellularLocation>
        <location evidence="2">Secreted</location>
    </subcellularLocation>
</comment>
<comment type="tissue specificity">
    <text evidence="5">Expressed by the venom gland.</text>
</comment>
<comment type="mass spectrometry"/>
<comment type="similarity">
    <text evidence="5">Belongs to the non-disulfide-bridged peptide (NDBP) superfamily.</text>
</comment>
<dbReference type="GO" id="GO:0005576">
    <property type="term" value="C:extracellular region"/>
    <property type="evidence" value="ECO:0007669"/>
    <property type="project" value="UniProtKB-SubCell"/>
</dbReference>